<reference key="1">
    <citation type="submission" date="2005-06" db="EMBL/GenBank/DDBJ databases">
        <title>DNA sequences of macaque genes expressed in brain or testis and its evolutionary implications.</title>
        <authorList>
            <consortium name="International consortium for macaque cDNA sequencing and analysis"/>
        </authorList>
    </citation>
    <scope>NUCLEOTIDE SEQUENCE [LARGE SCALE MRNA]</scope>
    <source>
        <tissue>Testis</tissue>
    </source>
</reference>
<name>CLHC1_MACFA</name>
<evidence type="ECO:0000255" key="1"/>
<organism>
    <name type="scientific">Macaca fascicularis</name>
    <name type="common">Crab-eating macaque</name>
    <name type="synonym">Cynomolgus monkey</name>
    <dbReference type="NCBI Taxonomy" id="9541"/>
    <lineage>
        <taxon>Eukaryota</taxon>
        <taxon>Metazoa</taxon>
        <taxon>Chordata</taxon>
        <taxon>Craniata</taxon>
        <taxon>Vertebrata</taxon>
        <taxon>Euteleostomi</taxon>
        <taxon>Mammalia</taxon>
        <taxon>Eutheria</taxon>
        <taxon>Euarchontoglires</taxon>
        <taxon>Primates</taxon>
        <taxon>Haplorrhini</taxon>
        <taxon>Catarrhini</taxon>
        <taxon>Cercopithecidae</taxon>
        <taxon>Cercopithecinae</taxon>
        <taxon>Macaca</taxon>
    </lineage>
</organism>
<sequence length="586" mass="67478">MSVHQIRKRAVLPPIICRSDKEFLESMQRYIITETERLGYNEEGPADEYYIIYRNVFDKVIEHVTAYKSILTSIKKEYDAFIETIKKGRRTAFCLHGKLKGLAAEPTALVYHRKRTIQLEAKMRIIENNSSKIQSQIDQIKQSRAAYDTKEVKYCTFSKDPSKPIPGMTLQESMNLDALTKYMKHLEDKYAEIKQAMLIKYVPAQRKSDLDEEMIVLLKRRDVAENLNRKLQFCHQRLQIISQALTSWVKSDMSSPFQDFVEQIQKTKYLQGDQGIVEELMEDDPHRAKEAEIMLHYIERFNELISLGEYEKAACYAANSPRRILRNIGTMNTFKAVGKIRGKPLPLLLFFEALFITSHAFRCPVDAALTLEGIKCGLSEKRLDLVINWVTQQRLTFSEEAGDVICDYGEQDTYNKAKCLALAQIIYSECGLHKKAILCLCKQGQTHRVMEYIQQFKDFTTDDLLQLLMSCPQIELIQCLTKELNEKQTSLSFGLAILHLFSIDKKKIGIKLLQEINKGGIDAVESLMINDSFCSTERWQEVANICSQNGFDKLSNDIMSILRSQAAVTEISEEDDAVNLMEHVFW</sequence>
<dbReference type="EMBL" id="AB169198">
    <property type="protein sequence ID" value="BAE01290.1"/>
    <property type="molecule type" value="mRNA"/>
</dbReference>
<dbReference type="RefSeq" id="NP_001270187.1">
    <property type="nucleotide sequence ID" value="NM_001283258.1"/>
</dbReference>
<dbReference type="SMR" id="Q4R6I5"/>
<dbReference type="STRING" id="9541.ENSMFAP00000044372"/>
<dbReference type="eggNOG" id="KOG0985">
    <property type="taxonomic scope" value="Eukaryota"/>
</dbReference>
<dbReference type="Proteomes" id="UP000233100">
    <property type="component" value="Unplaced"/>
</dbReference>
<dbReference type="Gene3D" id="1.25.40.30">
    <property type="match status" value="1"/>
</dbReference>
<dbReference type="InterPro" id="IPR016024">
    <property type="entry name" value="ARM-type_fold"/>
</dbReference>
<dbReference type="InterPro" id="IPR012331">
    <property type="entry name" value="Clathrin_H-chain_linker"/>
</dbReference>
<dbReference type="InterPro" id="IPR017212">
    <property type="entry name" value="CLHC1"/>
</dbReference>
<dbReference type="InterPro" id="IPR032755">
    <property type="entry name" value="TSNAXIP1_N"/>
</dbReference>
<dbReference type="PANTHER" id="PTHR10292:SF11">
    <property type="entry name" value="CLATHRIN HEAVY CHAIN LINKER DOMAIN-CONTAINING PROTEIN 1"/>
    <property type="match status" value="1"/>
</dbReference>
<dbReference type="PANTHER" id="PTHR10292">
    <property type="entry name" value="CLATHRIN HEAVY CHAIN RELATED"/>
    <property type="match status" value="1"/>
</dbReference>
<dbReference type="Pfam" id="PF13838">
    <property type="entry name" value="Clathrin_H_link"/>
    <property type="match status" value="1"/>
</dbReference>
<dbReference type="Pfam" id="PF15739">
    <property type="entry name" value="TSNAXIP1_N"/>
    <property type="match status" value="1"/>
</dbReference>
<dbReference type="PIRSF" id="PIRSF037469">
    <property type="entry name" value="Clathrin_H-chain-rel"/>
    <property type="match status" value="1"/>
</dbReference>
<dbReference type="SUPFAM" id="SSF48371">
    <property type="entry name" value="ARM repeat"/>
    <property type="match status" value="1"/>
</dbReference>
<gene>
    <name type="primary">CLHC1</name>
    <name type="ORF">QtsA-17948</name>
</gene>
<protein>
    <recommendedName>
        <fullName>Clathrin heavy chain linker domain-containing protein 1</fullName>
    </recommendedName>
</protein>
<accession>Q4R6I5</accession>
<feature type="chain" id="PRO_0000325871" description="Clathrin heavy chain linker domain-containing protein 1">
    <location>
        <begin position="1"/>
        <end position="586"/>
    </location>
</feature>
<feature type="coiled-coil region" evidence="1">
    <location>
        <begin position="174"/>
        <end position="232"/>
    </location>
</feature>
<proteinExistence type="evidence at transcript level"/>
<keyword id="KW-0175">Coiled coil</keyword>
<keyword id="KW-1185">Reference proteome</keyword>